<name>EX7L_STRP1</name>
<proteinExistence type="inferred from homology"/>
<sequence length="446" mass="50456">MADYLTVTHLTKYLKLKFDRDPYLERVYLTGQVSNFRKRPTHQYFSLKDESAVIQATMWAGVYKKLGFDLEEGMKINVIGRVQLYEPSGSYSIVIEKAEPDGIGALALQFEQLKKKLTAEGYFEQKHKQPLPQFVSKIGVITSPSGAVIRDIITTVSRRFPGVEILLFPTKVQGDGAAQEVVANIRRANQREDLDLLIVGRGGGSIEDLWAFNEEIVVQAIFESQLPVISSVGHETDTTLADFVADRRAATPTAAAELATPITKTDLMSWIVERQNRSYQACLRRIKQRQEWVDKLSQSVIFRQPERLYDAYLQKIDRLSMTLMNTMKDRLSSAKENKVQLDHALANSQLQTKIERYQDRVATAKRLLMANMASQYDSQLARFEKAQDALLSLDASRIIARGYAMIEKNQALVASVSQITKGDQLTIKMRDGQLDVEVKDVKNENI</sequence>
<comment type="function">
    <text evidence="1">Bidirectionally degrades single-stranded DNA into large acid-insoluble oligonucleotides, which are then degraded further into small acid-soluble oligonucleotides.</text>
</comment>
<comment type="catalytic activity">
    <reaction evidence="1">
        <text>Exonucleolytic cleavage in either 5'- to 3'- or 3'- to 5'-direction to yield nucleoside 5'-phosphates.</text>
        <dbReference type="EC" id="3.1.11.6"/>
    </reaction>
</comment>
<comment type="subunit">
    <text evidence="1">Heterooligomer composed of large and small subunits.</text>
</comment>
<comment type="subcellular location">
    <subcellularLocation>
        <location evidence="1">Cytoplasm</location>
    </subcellularLocation>
</comment>
<comment type="similarity">
    <text evidence="1">Belongs to the XseA family.</text>
</comment>
<evidence type="ECO:0000255" key="1">
    <source>
        <dbReference type="HAMAP-Rule" id="MF_00378"/>
    </source>
</evidence>
<gene>
    <name evidence="1" type="primary">xseA</name>
    <name type="ordered locus">SPy_1500</name>
    <name type="ordered locus">M5005_Spy1233</name>
</gene>
<accession>P67452</accession>
<accession>Q48XS4</accession>
<accession>Q99YX3</accession>
<feature type="chain" id="PRO_0000197893" description="Exodeoxyribonuclease 7 large subunit">
    <location>
        <begin position="1"/>
        <end position="446"/>
    </location>
</feature>
<reference key="1">
    <citation type="journal article" date="2001" name="Proc. Natl. Acad. Sci. U.S.A.">
        <title>Complete genome sequence of an M1 strain of Streptococcus pyogenes.</title>
        <authorList>
            <person name="Ferretti J.J."/>
            <person name="McShan W.M."/>
            <person name="Ajdic D.J."/>
            <person name="Savic D.J."/>
            <person name="Savic G."/>
            <person name="Lyon K."/>
            <person name="Primeaux C."/>
            <person name="Sezate S."/>
            <person name="Suvorov A.N."/>
            <person name="Kenton S."/>
            <person name="Lai H.S."/>
            <person name="Lin S.P."/>
            <person name="Qian Y."/>
            <person name="Jia H.G."/>
            <person name="Najar F.Z."/>
            <person name="Ren Q."/>
            <person name="Zhu H."/>
            <person name="Song L."/>
            <person name="White J."/>
            <person name="Yuan X."/>
            <person name="Clifton S.W."/>
            <person name="Roe B.A."/>
            <person name="McLaughlin R.E."/>
        </authorList>
    </citation>
    <scope>NUCLEOTIDE SEQUENCE [LARGE SCALE GENOMIC DNA]</scope>
    <source>
        <strain>ATCC 700294 / SF370 / Serotype M1</strain>
    </source>
</reference>
<reference key="2">
    <citation type="journal article" date="2005" name="J. Infect. Dis.">
        <title>Evolutionary origin and emergence of a highly successful clone of serotype M1 group A Streptococcus involved multiple horizontal gene transfer events.</title>
        <authorList>
            <person name="Sumby P."/>
            <person name="Porcella S.F."/>
            <person name="Madrigal A.G."/>
            <person name="Barbian K.D."/>
            <person name="Virtaneva K."/>
            <person name="Ricklefs S.M."/>
            <person name="Sturdevant D.E."/>
            <person name="Graham M.R."/>
            <person name="Vuopio-Varkila J."/>
            <person name="Hoe N.P."/>
            <person name="Musser J.M."/>
        </authorList>
    </citation>
    <scope>NUCLEOTIDE SEQUENCE [LARGE SCALE GENOMIC DNA]</scope>
    <source>
        <strain>ATCC BAA-947 / MGAS5005 / Serotype M1</strain>
    </source>
</reference>
<dbReference type="EC" id="3.1.11.6" evidence="1"/>
<dbReference type="EMBL" id="AE004092">
    <property type="protein sequence ID" value="AAK34299.1"/>
    <property type="molecule type" value="Genomic_DNA"/>
</dbReference>
<dbReference type="EMBL" id="CP000017">
    <property type="protein sequence ID" value="AAZ51851.1"/>
    <property type="molecule type" value="Genomic_DNA"/>
</dbReference>
<dbReference type="RefSeq" id="NP_269578.1">
    <property type="nucleotide sequence ID" value="NC_002737.2"/>
</dbReference>
<dbReference type="SMR" id="P67452"/>
<dbReference type="PaxDb" id="1314-HKU360_01275"/>
<dbReference type="KEGG" id="spy:SPy_1500"/>
<dbReference type="KEGG" id="spz:M5005_Spy1233"/>
<dbReference type="PATRIC" id="fig|160490.10.peg.1310"/>
<dbReference type="HOGENOM" id="CLU_023625_3_1_9"/>
<dbReference type="OMA" id="WPAVRFE"/>
<dbReference type="Proteomes" id="UP000000750">
    <property type="component" value="Chromosome"/>
</dbReference>
<dbReference type="GO" id="GO:0005737">
    <property type="term" value="C:cytoplasm"/>
    <property type="evidence" value="ECO:0007669"/>
    <property type="project" value="UniProtKB-SubCell"/>
</dbReference>
<dbReference type="GO" id="GO:0009318">
    <property type="term" value="C:exodeoxyribonuclease VII complex"/>
    <property type="evidence" value="ECO:0007669"/>
    <property type="project" value="InterPro"/>
</dbReference>
<dbReference type="GO" id="GO:0008855">
    <property type="term" value="F:exodeoxyribonuclease VII activity"/>
    <property type="evidence" value="ECO:0007669"/>
    <property type="project" value="UniProtKB-UniRule"/>
</dbReference>
<dbReference type="GO" id="GO:0003676">
    <property type="term" value="F:nucleic acid binding"/>
    <property type="evidence" value="ECO:0007669"/>
    <property type="project" value="InterPro"/>
</dbReference>
<dbReference type="GO" id="GO:0006308">
    <property type="term" value="P:DNA catabolic process"/>
    <property type="evidence" value="ECO:0007669"/>
    <property type="project" value="UniProtKB-UniRule"/>
</dbReference>
<dbReference type="CDD" id="cd04489">
    <property type="entry name" value="ExoVII_LU_OBF"/>
    <property type="match status" value="1"/>
</dbReference>
<dbReference type="HAMAP" id="MF_00378">
    <property type="entry name" value="Exonuc_7_L"/>
    <property type="match status" value="1"/>
</dbReference>
<dbReference type="InterPro" id="IPR003753">
    <property type="entry name" value="Exonuc_VII_L"/>
</dbReference>
<dbReference type="InterPro" id="IPR020579">
    <property type="entry name" value="Exonuc_VII_lsu_C"/>
</dbReference>
<dbReference type="InterPro" id="IPR025824">
    <property type="entry name" value="OB-fold_nuc-bd_dom"/>
</dbReference>
<dbReference type="NCBIfam" id="TIGR00237">
    <property type="entry name" value="xseA"/>
    <property type="match status" value="1"/>
</dbReference>
<dbReference type="PANTHER" id="PTHR30008">
    <property type="entry name" value="EXODEOXYRIBONUCLEASE 7 LARGE SUBUNIT"/>
    <property type="match status" value="1"/>
</dbReference>
<dbReference type="PANTHER" id="PTHR30008:SF0">
    <property type="entry name" value="EXODEOXYRIBONUCLEASE 7 LARGE SUBUNIT"/>
    <property type="match status" value="1"/>
</dbReference>
<dbReference type="Pfam" id="PF02601">
    <property type="entry name" value="Exonuc_VII_L"/>
    <property type="match status" value="1"/>
</dbReference>
<dbReference type="Pfam" id="PF13742">
    <property type="entry name" value="tRNA_anti_2"/>
    <property type="match status" value="1"/>
</dbReference>
<protein>
    <recommendedName>
        <fullName evidence="1">Exodeoxyribonuclease 7 large subunit</fullName>
        <ecNumber evidence="1">3.1.11.6</ecNumber>
    </recommendedName>
    <alternativeName>
        <fullName evidence="1">Exodeoxyribonuclease VII large subunit</fullName>
        <shortName evidence="1">Exonuclease VII large subunit</shortName>
    </alternativeName>
</protein>
<organism>
    <name type="scientific">Streptococcus pyogenes serotype M1</name>
    <dbReference type="NCBI Taxonomy" id="301447"/>
    <lineage>
        <taxon>Bacteria</taxon>
        <taxon>Bacillati</taxon>
        <taxon>Bacillota</taxon>
        <taxon>Bacilli</taxon>
        <taxon>Lactobacillales</taxon>
        <taxon>Streptococcaceae</taxon>
        <taxon>Streptococcus</taxon>
    </lineage>
</organism>
<keyword id="KW-0963">Cytoplasm</keyword>
<keyword id="KW-0269">Exonuclease</keyword>
<keyword id="KW-0378">Hydrolase</keyword>
<keyword id="KW-0540">Nuclease</keyword>
<keyword id="KW-1185">Reference proteome</keyword>